<organism>
    <name type="scientific">Mus musculus</name>
    <name type="common">Mouse</name>
    <dbReference type="NCBI Taxonomy" id="10090"/>
    <lineage>
        <taxon>Eukaryota</taxon>
        <taxon>Metazoa</taxon>
        <taxon>Chordata</taxon>
        <taxon>Craniata</taxon>
        <taxon>Vertebrata</taxon>
        <taxon>Euteleostomi</taxon>
        <taxon>Mammalia</taxon>
        <taxon>Eutheria</taxon>
        <taxon>Euarchontoglires</taxon>
        <taxon>Glires</taxon>
        <taxon>Rodentia</taxon>
        <taxon>Myomorpha</taxon>
        <taxon>Muroidea</taxon>
        <taxon>Muridae</taxon>
        <taxon>Murinae</taxon>
        <taxon>Mus</taxon>
        <taxon>Mus</taxon>
    </lineage>
</organism>
<feature type="signal peptide" evidence="1">
    <location>
        <begin position="1"/>
        <end position="23"/>
    </location>
</feature>
<feature type="chain" id="PRO_0000016382" description="Interferon alpha-9">
    <location>
        <begin position="24"/>
        <end position="190"/>
    </location>
</feature>
<feature type="glycosylation site" description="N-linked (GlcNAc...) asparagine" evidence="2">
    <location>
        <position position="101"/>
    </location>
</feature>
<feature type="disulfide bond" evidence="1">
    <location>
        <begin position="24"/>
        <end position="122"/>
    </location>
</feature>
<feature type="disulfide bond" evidence="1">
    <location>
        <begin position="52"/>
        <end position="162"/>
    </location>
</feature>
<comment type="function">
    <text>Produced by macrophages, IFN-alpha have antiviral activities. Interferon stimulates the production of two enzymes: a protein kinase and an oligoadenylate synthetase.</text>
</comment>
<comment type="subcellular location">
    <subcellularLocation>
        <location>Secreted</location>
    </subcellularLocation>
</comment>
<comment type="similarity">
    <text evidence="2">Belongs to the alpha/beta interferon family.</text>
</comment>
<reference key="1">
    <citation type="journal article" date="1986" name="Gene">
        <title>Structure and expression of a new murine interferon-alpha gene: MuIFN-alpha I9.</title>
        <authorList>
            <person name="Seif I."/>
            <person name="Demaeyer-Guignard J."/>
        </authorList>
    </citation>
    <scope>NUCLEOTIDE SEQUENCE [GENOMIC DNA]</scope>
</reference>
<proteinExistence type="inferred from homology"/>
<protein>
    <recommendedName>
        <fullName>Interferon alpha-9</fullName>
        <shortName>IFN-alpha-9</shortName>
    </recommendedName>
</protein>
<dbReference type="EMBL" id="M13660">
    <property type="protein sequence ID" value="AAA37886.1"/>
    <property type="molecule type" value="Genomic_DNA"/>
</dbReference>
<dbReference type="CCDS" id="CCDS18321.1"/>
<dbReference type="PIR" id="A24401">
    <property type="entry name" value="A24401"/>
</dbReference>
<dbReference type="RefSeq" id="NP_034637.1">
    <property type="nucleotide sequence ID" value="NM_010507.1"/>
</dbReference>
<dbReference type="SMR" id="P09235"/>
<dbReference type="FunCoup" id="P09235">
    <property type="interactions" value="1104"/>
</dbReference>
<dbReference type="STRING" id="10090.ENSMUSP00000099871"/>
<dbReference type="GlyCosmos" id="P09235">
    <property type="glycosylation" value="1 site, No reported glycans"/>
</dbReference>
<dbReference type="GlyGen" id="P09235">
    <property type="glycosylation" value="1 site"/>
</dbReference>
<dbReference type="PaxDb" id="10090-ENSMUSP00000099871"/>
<dbReference type="DNASU" id="15972"/>
<dbReference type="Ensembl" id="ENSMUST00000102807.2">
    <property type="protein sequence ID" value="ENSMUSP00000099871.2"/>
    <property type="gene ID" value="ENSMUSG00000095270.2"/>
</dbReference>
<dbReference type="GeneID" id="15972"/>
<dbReference type="KEGG" id="mmu:15972"/>
<dbReference type="UCSC" id="uc008tnc.1">
    <property type="organism name" value="mouse"/>
</dbReference>
<dbReference type="AGR" id="MGI:107659"/>
<dbReference type="CTD" id="15972"/>
<dbReference type="MGI" id="MGI:107659">
    <property type="gene designation" value="Ifna9"/>
</dbReference>
<dbReference type="VEuPathDB" id="HostDB:ENSMUSG00000095270"/>
<dbReference type="eggNOG" id="ENOG502SQAC">
    <property type="taxonomic scope" value="Eukaryota"/>
</dbReference>
<dbReference type="GeneTree" id="ENSGT01000000214430"/>
<dbReference type="HOGENOM" id="CLU_109427_0_0_1"/>
<dbReference type="InParanoid" id="P09235"/>
<dbReference type="OMA" id="NNRRTLM"/>
<dbReference type="OrthoDB" id="9833506at2759"/>
<dbReference type="PhylomeDB" id="P09235"/>
<dbReference type="TreeFam" id="TF336177"/>
<dbReference type="Reactome" id="R-MMU-909733">
    <property type="pathway name" value="Interferon alpha/beta signaling"/>
</dbReference>
<dbReference type="Reactome" id="R-MMU-912694">
    <property type="pathway name" value="Regulation of IFNA/IFNB signaling"/>
</dbReference>
<dbReference type="BioGRID-ORCS" id="15972">
    <property type="hits" value="4 hits in 77 CRISPR screens"/>
</dbReference>
<dbReference type="PRO" id="PR:P09235"/>
<dbReference type="Proteomes" id="UP000000589">
    <property type="component" value="Chromosome 4"/>
</dbReference>
<dbReference type="RNAct" id="P09235">
    <property type="molecule type" value="protein"/>
</dbReference>
<dbReference type="Bgee" id="ENSMUSG00000095270">
    <property type="expression patterns" value="Expressed in telencephalic nucleus and 15 other cell types or tissues"/>
</dbReference>
<dbReference type="GO" id="GO:0005615">
    <property type="term" value="C:extracellular space"/>
    <property type="evidence" value="ECO:0000314"/>
    <property type="project" value="MGI"/>
</dbReference>
<dbReference type="GO" id="GO:0005125">
    <property type="term" value="F:cytokine activity"/>
    <property type="evidence" value="ECO:0007669"/>
    <property type="project" value="UniProtKB-KW"/>
</dbReference>
<dbReference type="GO" id="GO:0005126">
    <property type="term" value="F:cytokine receptor binding"/>
    <property type="evidence" value="ECO:0007669"/>
    <property type="project" value="InterPro"/>
</dbReference>
<dbReference type="GO" id="GO:0051607">
    <property type="term" value="P:defense response to virus"/>
    <property type="evidence" value="ECO:0000314"/>
    <property type="project" value="MGI"/>
</dbReference>
<dbReference type="GO" id="GO:0002323">
    <property type="term" value="P:natural killer cell activation involved in immune response"/>
    <property type="evidence" value="ECO:0000314"/>
    <property type="project" value="MGI"/>
</dbReference>
<dbReference type="CDD" id="cd00095">
    <property type="entry name" value="IFab"/>
    <property type="match status" value="1"/>
</dbReference>
<dbReference type="FunFam" id="1.20.1250.10:FF:000001">
    <property type="entry name" value="Interferon alpha"/>
    <property type="match status" value="1"/>
</dbReference>
<dbReference type="Gene3D" id="1.20.1250.10">
    <property type="match status" value="1"/>
</dbReference>
<dbReference type="InterPro" id="IPR009079">
    <property type="entry name" value="4_helix_cytokine-like_core"/>
</dbReference>
<dbReference type="InterPro" id="IPR000471">
    <property type="entry name" value="Interferon_alpha/beta/delta"/>
</dbReference>
<dbReference type="PANTHER" id="PTHR11691:SF74">
    <property type="entry name" value="ALPHA-INTERFERON-RELATED"/>
    <property type="match status" value="1"/>
</dbReference>
<dbReference type="PANTHER" id="PTHR11691">
    <property type="entry name" value="TYPE I INTERFERON"/>
    <property type="match status" value="1"/>
</dbReference>
<dbReference type="Pfam" id="PF00143">
    <property type="entry name" value="Interferon"/>
    <property type="match status" value="1"/>
</dbReference>
<dbReference type="PRINTS" id="PR00266">
    <property type="entry name" value="INTERFERONAB"/>
</dbReference>
<dbReference type="SMART" id="SM00076">
    <property type="entry name" value="IFabd"/>
    <property type="match status" value="1"/>
</dbReference>
<dbReference type="SUPFAM" id="SSF47266">
    <property type="entry name" value="4-helical cytokines"/>
    <property type="match status" value="1"/>
</dbReference>
<dbReference type="PROSITE" id="PS00252">
    <property type="entry name" value="INTERFERON_A_B_D"/>
    <property type="match status" value="1"/>
</dbReference>
<name>IFNA9_MOUSE</name>
<keyword id="KW-0051">Antiviral defense</keyword>
<keyword id="KW-0202">Cytokine</keyword>
<keyword id="KW-1015">Disulfide bond</keyword>
<keyword id="KW-0325">Glycoprotein</keyword>
<keyword id="KW-1185">Reference proteome</keyword>
<keyword id="KW-0964">Secreted</keyword>
<keyword id="KW-0732">Signal</keyword>
<evidence type="ECO:0000250" key="1"/>
<evidence type="ECO:0000305" key="2"/>
<gene>
    <name type="primary">Ifna9</name>
    <name type="synonym">Ifa9</name>
</gene>
<sequence length="190" mass="21684">MARPFAFLMVLVVISYWSTCSLGCDLPQTHNLRNKKILTLLAQMRRLSPLSCLKDRKDFGFPQEKVDAQQIQEAQAIPVLSELTQQILTLFTSKDSSAAWNATLLDSFCTGLHQLLNDLQGCLMQLVGMKELPLTQEDSQLAMKKYFHRITVYLREKKHSPCAWEVVRAEVWRALSSSVNLLARLSEEKE</sequence>
<accession>P09235</accession>